<keyword id="KW-0119">Carbohydrate metabolism</keyword>
<keyword id="KW-0325">Glycoprotein</keyword>
<keyword id="KW-0326">Glycosidase</keyword>
<keyword id="KW-0378">Hydrolase</keyword>
<keyword id="KW-0624">Polysaccharide degradation</keyword>
<keyword id="KW-0732">Signal</keyword>
<evidence type="ECO:0000250" key="1"/>
<evidence type="ECO:0000255" key="2"/>
<evidence type="ECO:0000255" key="3">
    <source>
        <dbReference type="PROSITE-ProRule" id="PRU10051"/>
    </source>
</evidence>
<evidence type="ECO:0000256" key="4">
    <source>
        <dbReference type="SAM" id="MobiDB-lite"/>
    </source>
</evidence>
<evidence type="ECO:0000305" key="5"/>
<dbReference type="EC" id="3.2.1.3"/>
<dbReference type="EMBL" id="X02649">
    <property type="protein sequence ID" value="CAA26487.1"/>
    <property type="status" value="ALT_INIT"/>
    <property type="molecule type" value="Genomic_DNA"/>
</dbReference>
<dbReference type="EMBL" id="D00428">
    <property type="protein sequence ID" value="BAA00332.1"/>
    <property type="molecule type" value="Genomic_DNA"/>
</dbReference>
<dbReference type="PIR" id="A21896">
    <property type="entry name" value="ALBYG"/>
</dbReference>
<dbReference type="SMR" id="P04065"/>
<dbReference type="CAZy" id="GH15">
    <property type="family name" value="Glycoside Hydrolase Family 15"/>
</dbReference>
<dbReference type="GlyCosmos" id="P04065">
    <property type="glycosylation" value="12 sites, No reported glycans"/>
</dbReference>
<dbReference type="SGD" id="S000029522">
    <property type="gene designation" value="STA1"/>
</dbReference>
<dbReference type="VEuPathDB" id="FungiDB:YIL099W"/>
<dbReference type="BRENDA" id="3.2.1.3">
    <property type="organism ID" value="5495"/>
</dbReference>
<dbReference type="GO" id="GO:0000324">
    <property type="term" value="C:fungal-type vacuole"/>
    <property type="evidence" value="ECO:0007669"/>
    <property type="project" value="TreeGrafter"/>
</dbReference>
<dbReference type="GO" id="GO:0004339">
    <property type="term" value="F:glucan 1,4-alpha-glucosidase activity"/>
    <property type="evidence" value="ECO:0007669"/>
    <property type="project" value="UniProtKB-EC"/>
</dbReference>
<dbReference type="GO" id="GO:0000272">
    <property type="term" value="P:polysaccharide catabolic process"/>
    <property type="evidence" value="ECO:0007669"/>
    <property type="project" value="UniProtKB-KW"/>
</dbReference>
<dbReference type="Gene3D" id="1.50.10.10">
    <property type="match status" value="1"/>
</dbReference>
<dbReference type="InterPro" id="IPR008928">
    <property type="entry name" value="6-hairpin_glycosidase_sf"/>
</dbReference>
<dbReference type="InterPro" id="IPR012341">
    <property type="entry name" value="6hp_glycosidase-like_sf"/>
</dbReference>
<dbReference type="InterPro" id="IPR011613">
    <property type="entry name" value="GH15-like"/>
</dbReference>
<dbReference type="InterPro" id="IPR000165">
    <property type="entry name" value="Glucoamylase"/>
</dbReference>
<dbReference type="InterPro" id="IPR046966">
    <property type="entry name" value="Glucoamylase_active_site"/>
</dbReference>
<dbReference type="PANTHER" id="PTHR31616:SF9">
    <property type="entry name" value="GLUCOAMYLASE, INTRACELLULAR SPORULATION-SPECIFIC"/>
    <property type="match status" value="1"/>
</dbReference>
<dbReference type="PANTHER" id="PTHR31616">
    <property type="entry name" value="TREHALASE"/>
    <property type="match status" value="1"/>
</dbReference>
<dbReference type="Pfam" id="PF00723">
    <property type="entry name" value="Glyco_hydro_15"/>
    <property type="match status" value="1"/>
</dbReference>
<dbReference type="PRINTS" id="PR00736">
    <property type="entry name" value="GLHYDRLASE15"/>
</dbReference>
<dbReference type="SUPFAM" id="SSF48208">
    <property type="entry name" value="Six-hairpin glycosidases"/>
    <property type="match status" value="1"/>
</dbReference>
<dbReference type="PROSITE" id="PS00820">
    <property type="entry name" value="GLUCOAMYLASE"/>
    <property type="match status" value="1"/>
</dbReference>
<proteinExistence type="inferred from homology"/>
<feature type="signal peptide">
    <location>
        <begin position="1"/>
        <end position="21"/>
    </location>
</feature>
<feature type="chain" id="PRO_0000001477" description="Glucoamylase S1">
    <location>
        <begin position="22"/>
        <end position="767"/>
    </location>
</feature>
<feature type="region of interest" description="Disordered" evidence="4">
    <location>
        <begin position="29"/>
        <end position="83"/>
    </location>
</feature>
<feature type="region of interest" description="Disordered" evidence="4">
    <location>
        <begin position="125"/>
        <end position="149"/>
    </location>
</feature>
<feature type="region of interest" description="H subunit">
    <location>
        <begin position="348"/>
        <end position="691"/>
    </location>
</feature>
<feature type="region of interest" description="Y subunit">
    <location>
        <begin position="692"/>
        <end position="767"/>
    </location>
</feature>
<feature type="compositionally biased region" description="Low complexity" evidence="4">
    <location>
        <begin position="30"/>
        <end position="48"/>
    </location>
</feature>
<feature type="compositionally biased region" description="Polar residues" evidence="4">
    <location>
        <begin position="49"/>
        <end position="66"/>
    </location>
</feature>
<feature type="compositionally biased region" description="Low complexity" evidence="4">
    <location>
        <begin position="71"/>
        <end position="83"/>
    </location>
</feature>
<feature type="compositionally biased region" description="Low complexity" evidence="4">
    <location>
        <begin position="131"/>
        <end position="149"/>
    </location>
</feature>
<feature type="active site" description="Proton acceptor" evidence="3">
    <location>
        <position position="518"/>
    </location>
</feature>
<feature type="active site" description="Proton donor" evidence="3">
    <location>
        <position position="521"/>
    </location>
</feature>
<feature type="binding site" evidence="1">
    <location>
        <position position="455"/>
    </location>
    <ligand>
        <name>substrate</name>
    </ligand>
</feature>
<feature type="glycosylation site" description="N-linked (GlcNAc...) asparagine" evidence="2">
    <location>
        <position position="35"/>
    </location>
</feature>
<feature type="glycosylation site" description="N-linked (GlcNAc...) asparagine" evidence="2">
    <location>
        <position position="308"/>
    </location>
</feature>
<feature type="glycosylation site" description="N-linked (GlcNAc...) asparagine" evidence="2">
    <location>
        <position position="322"/>
    </location>
</feature>
<feature type="glycosylation site" description="N-linked (GlcNAc...) asparagine" evidence="2">
    <location>
        <position position="414"/>
    </location>
</feature>
<feature type="glycosylation site" description="N-linked (GlcNAc...) asparagine" evidence="2">
    <location>
        <position position="423"/>
    </location>
</feature>
<feature type="glycosylation site" description="N-linked (GlcNAc...) asparagine" evidence="2">
    <location>
        <position position="434"/>
    </location>
</feature>
<feature type="glycosylation site" description="N-linked (GlcNAc...) asparagine" evidence="2">
    <location>
        <position position="513"/>
    </location>
</feature>
<feature type="glycosylation site" description="N-linked (GlcNAc...) asparagine" evidence="2">
    <location>
        <position position="546"/>
    </location>
</feature>
<feature type="glycosylation site" description="N-linked (GlcNAc...) asparagine" evidence="2">
    <location>
        <position position="645"/>
    </location>
</feature>
<feature type="glycosylation site" description="N-linked (GlcNAc...) asparagine" evidence="2">
    <location>
        <position position="650"/>
    </location>
</feature>
<feature type="glycosylation site" description="N-linked (GlcNAc...) asparagine" evidence="2">
    <location>
        <position position="720"/>
    </location>
</feature>
<feature type="glycosylation site" description="N-linked (GlcNAc...) asparagine" evidence="2">
    <location>
        <position position="741"/>
    </location>
</feature>
<reference key="1">
    <citation type="journal article" date="1985" name="J. Bacteriol.">
        <title>Nucleotide sequence of the extracellular glucoamylase gene STA1 in the yeast Saccharomyces diastaticus.</title>
        <authorList>
            <person name="Yamashita I."/>
            <person name="Suzuki K."/>
            <person name="Fukui S."/>
        </authorList>
    </citation>
    <scope>NUCLEOTIDE SEQUENCE [GENOMIC DNA]</scope>
    <source>
        <strain>Diastaticus / ATCC 60709 / 5106-9A</strain>
    </source>
</reference>
<reference key="2">
    <citation type="journal article" date="1986" name="Agric. Biol. Chem.">
        <title>Proteolytic processing of glucoamylase in the yeast Saccharomyces cerevisiae.</title>
        <authorList>
            <person name="Yamashita I."/>
            <person name="Suzuki K."/>
            <person name="Sakuzo F."/>
        </authorList>
        <dbReference type="AGRICOLA" id="IND86044727"/>
    </citation>
    <scope>NUCLEOTIDE SEQUENCE [GENOMIC DNA] OF 1-54</scope>
</reference>
<reference key="3">
    <citation type="journal article" date="1989" name="Agric. Biol. Chem.">
        <title>Upstream regions of the yeast glucoamylase gene which are required for efficient transcription.</title>
        <authorList>
            <person name="Shima H."/>
            <person name="Inui M."/>
            <person name="Akada R."/>
            <person name="Yamashita I."/>
        </authorList>
    </citation>
    <scope>NUCLEOTIDE SEQUENCE [GENOMIC DNA] OF 1-64</scope>
</reference>
<organism>
    <name type="scientific">Saccharomyces cerevisiae</name>
    <name type="common">Baker's yeast</name>
    <dbReference type="NCBI Taxonomy" id="4932"/>
    <lineage>
        <taxon>Eukaryota</taxon>
        <taxon>Fungi</taxon>
        <taxon>Dikarya</taxon>
        <taxon>Ascomycota</taxon>
        <taxon>Saccharomycotina</taxon>
        <taxon>Saccharomycetes</taxon>
        <taxon>Saccharomycetales</taxon>
        <taxon>Saccharomycetaceae</taxon>
        <taxon>Saccharomyces</taxon>
    </lineage>
</organism>
<protein>
    <recommendedName>
        <fullName>Glucoamylase S1</fullName>
        <ecNumber>3.2.1.3</ecNumber>
    </recommendedName>
    <alternativeName>
        <fullName>1,4-alpha-D-glucan glucohydrolase</fullName>
    </alternativeName>
    <alternativeName>
        <fullName>GAI</fullName>
    </alternativeName>
    <alternativeName>
        <fullName>Glucan 1,4-alpha-glucosidase</fullName>
    </alternativeName>
</protein>
<sequence>MQRPFLLAYLVLSLLFNSALGFPTALVPRGSSSSNITSSGPSSTPFSSATESFSTGTTVTPSSSKYPGSKTETSVSSTTETTIVPTTTTTSVITPSTTTITTTVCSTGTNSAGETTSGCSPKTITTTVPCSTSPSETASESTTTSPTTPVTTVVSTTVVTTEYSTSTKQGGEITTTFVTKNIPTTYLTTIAPTSSVTTVTNFTPTTITTTVCSTGTNSAGETTSGCSPKTVTTTVPCSTGTGEYTTEATAPVTTAVTTTVVTTESSTGTNSAGKTTTSYTTKSVPTTYVFDFGKGILDQSCGGVFSNNGSSQVQLRDVVLMNGTVVYDSNGAWDSSALEEWLQRQKKVSIERIFENIGPSAVYPSILPGVVIASPSQTHPDYFYQWIRDSALTINSIVSHSADPAIETLLQYLNVSFHLQRTNNTLGAGIGYTNDTVALGDPKWNVDNTAFTEPWGRPQNDGPALRSIAILKIIDYIKQSGTDLGAKYPFQSTADIFDDIVRWDLRFIIDHWNSSGFDLWEEVNGMHFFTLLVQLSAVDRSLSYFNASERSSPFVEELRQTRRDISKFLVDPANGFINGKYNYIVETPMIADTLRSGLDISTLLAANTVHDAPSASHLPFDINDPAVLNTLHHLMLHMRSIYPINDSSKNATGIALGRYPEDVYDGYGVGEGNPWVLATCAASTTLYQLIYRHISEQHDLVVPMNNDCSNAFWSELVFSNLTTLGNDEGYLILEFNTPAFNQTIQKIFQLADSFLVKLKATWEQTGN</sequence>
<gene>
    <name type="primary">STA1</name>
    <name type="synonym">DEX2</name>
    <name type="synonym">MAL5</name>
</gene>
<accession>P04065</accession>
<accession>Q92314</accession>
<name>AMYH_YEASX</name>
<comment type="catalytic activity">
    <reaction>
        <text>Hydrolysis of terminal (1-&gt;4)-linked alpha-D-glucose residues successively from non-reducing ends of the chains with release of beta-D-glucose.</text>
        <dbReference type="EC" id="3.2.1.3"/>
    </reaction>
</comment>
<comment type="similarity">
    <text evidence="5">Belongs to the glycosyl hydrolase 15 family.</text>
</comment>
<comment type="sequence caution" evidence="5">
    <conflict type="erroneous initiation">
        <sequence resource="EMBL-CDS" id="CAA26487"/>
    </conflict>
</comment>